<sequence length="346" mass="39211">MPRGQKSTLHAREKRQQTRGQTQDHQGAQITATNKKKVSFSSPLILGATIQKKSAGRSRSALKKPQRALSTTTSVDVSYKKSYKGANSKIEKKQSFSQGLSSTVQSRTDPLIMKTNMLVQFLMEMYKMKKPIMKADMLKIVQKSHKNCFPEILKKASFNMEVVFGVDLKKVDSTKDSYVLVSKMDLPNNGTVTRGRGFPKTGLLLNLLGVIFMKGNCATEEKIWEFLNKMRIYDGKKHFIFGEPRKLITQDLVKLKYLEYRQVPNSNPARYEFLWGPRAHAETSKMKVLEFWAKVNKTVPSAFQFWYEEALRDEEERVQAAAMLNDGSSAMGRKCSKAKASSSSHA</sequence>
<evidence type="ECO:0000255" key="1">
    <source>
        <dbReference type="PROSITE-ProRule" id="PRU00127"/>
    </source>
</evidence>
<evidence type="ECO:0000256" key="2">
    <source>
        <dbReference type="SAM" id="MobiDB-lite"/>
    </source>
</evidence>
<evidence type="ECO:0000269" key="3">
    <source>
    </source>
</evidence>
<evidence type="ECO:0000269" key="4">
    <source>
    </source>
</evidence>
<evidence type="ECO:0000269" key="5">
    <source>
    </source>
</evidence>
<comment type="interaction">
    <interactant intactId="EBI-21634885">
        <id>O15480</id>
    </interactant>
    <interactant intactId="EBI-1055254">
        <id>Q8WXH2</id>
        <label>JPH3</label>
    </interactant>
    <organismsDiffer>false</organismsDiffer>
    <experiments>3</experiments>
</comment>
<comment type="interaction">
    <interactant intactId="EBI-21634885">
        <id>O15480</id>
    </interactant>
    <interactant intactId="EBI-1024281">
        <id>Q15435</id>
        <label>PPP1R7</label>
    </interactant>
    <organismsDiffer>false</organismsDiffer>
    <experiments>3</experiments>
</comment>
<comment type="tissue specificity">
    <text>Expressed in testis.</text>
</comment>
<gene>
    <name type="primary">MAGEB3</name>
</gene>
<organism>
    <name type="scientific">Homo sapiens</name>
    <name type="common">Human</name>
    <dbReference type="NCBI Taxonomy" id="9606"/>
    <lineage>
        <taxon>Eukaryota</taxon>
        <taxon>Metazoa</taxon>
        <taxon>Chordata</taxon>
        <taxon>Craniata</taxon>
        <taxon>Vertebrata</taxon>
        <taxon>Euteleostomi</taxon>
        <taxon>Mammalia</taxon>
        <taxon>Eutheria</taxon>
        <taxon>Euarchontoglires</taxon>
        <taxon>Primates</taxon>
        <taxon>Haplorrhini</taxon>
        <taxon>Catarrhini</taxon>
        <taxon>Hominidae</taxon>
        <taxon>Homo</taxon>
    </lineage>
</organism>
<name>MAGB3_HUMAN</name>
<keyword id="KW-1267">Proteomics identification</keyword>
<keyword id="KW-1185">Reference proteome</keyword>
<keyword id="KW-0825">Tumor antigen</keyword>
<protein>
    <recommendedName>
        <fullName>Melanoma-associated antigen B3</fullName>
    </recommendedName>
    <alternativeName>
        <fullName>MAGE-B3 antigen</fullName>
    </alternativeName>
</protein>
<dbReference type="EMBL" id="U93163">
    <property type="protein sequence ID" value="AAC23618.1"/>
    <property type="molecule type" value="Genomic_DNA"/>
</dbReference>
<dbReference type="EMBL" id="AK057441">
    <property type="protein sequence ID" value="BAG51914.1"/>
    <property type="molecule type" value="mRNA"/>
</dbReference>
<dbReference type="EMBL" id="AC005185">
    <property type="protein sequence ID" value="AAD10636.1"/>
    <property type="molecule type" value="Genomic_DNA"/>
</dbReference>
<dbReference type="EMBL" id="BC069784">
    <property type="protein sequence ID" value="AAH69784.1"/>
    <property type="molecule type" value="mRNA"/>
</dbReference>
<dbReference type="EMBL" id="BC074756">
    <property type="protein sequence ID" value="AAH74756.1"/>
    <property type="molecule type" value="mRNA"/>
</dbReference>
<dbReference type="EMBL" id="BC126320">
    <property type="protein sequence ID" value="AAI26321.1"/>
    <property type="molecule type" value="mRNA"/>
</dbReference>
<dbReference type="EMBL" id="BC126322">
    <property type="protein sequence ID" value="AAI26323.1"/>
    <property type="molecule type" value="mRNA"/>
</dbReference>
<dbReference type="CCDS" id="CCDS14220.1"/>
<dbReference type="RefSeq" id="NP_001373794.1">
    <property type="nucleotide sequence ID" value="NM_001386865.1"/>
</dbReference>
<dbReference type="RefSeq" id="NP_002356.2">
    <property type="nucleotide sequence ID" value="NM_002365.4"/>
</dbReference>
<dbReference type="RefSeq" id="XP_011543815.1">
    <property type="nucleotide sequence ID" value="XM_011545513.3"/>
</dbReference>
<dbReference type="RefSeq" id="XP_011543816.1">
    <property type="nucleotide sequence ID" value="XM_011545514.2"/>
</dbReference>
<dbReference type="SMR" id="O15480"/>
<dbReference type="BioGRID" id="110288">
    <property type="interactions" value="4"/>
</dbReference>
<dbReference type="FunCoup" id="O15480">
    <property type="interactions" value="56"/>
</dbReference>
<dbReference type="IntAct" id="O15480">
    <property type="interactions" value="4"/>
</dbReference>
<dbReference type="STRING" id="9606.ENSP00000355198"/>
<dbReference type="GlyGen" id="O15480">
    <property type="glycosylation" value="1 site, 1 O-linked glycan (1 site)"/>
</dbReference>
<dbReference type="iPTMnet" id="O15480"/>
<dbReference type="PhosphoSitePlus" id="O15480"/>
<dbReference type="BioMuta" id="MAGEB3"/>
<dbReference type="MassIVE" id="O15480"/>
<dbReference type="PaxDb" id="9606-ENSP00000355198"/>
<dbReference type="PeptideAtlas" id="O15480"/>
<dbReference type="ProteomicsDB" id="48685"/>
<dbReference type="Antibodypedia" id="24658">
    <property type="antibodies" value="198 antibodies from 25 providers"/>
</dbReference>
<dbReference type="DNASU" id="4114"/>
<dbReference type="Ensembl" id="ENST00000361644.4">
    <property type="protein sequence ID" value="ENSP00000355198.2"/>
    <property type="gene ID" value="ENSG00000198798.6"/>
</dbReference>
<dbReference type="Ensembl" id="ENST00000620842.1">
    <property type="protein sequence ID" value="ENSP00000478513.1"/>
    <property type="gene ID" value="ENSG00000198798.6"/>
</dbReference>
<dbReference type="GeneID" id="4114"/>
<dbReference type="KEGG" id="hsa:4114"/>
<dbReference type="MANE-Select" id="ENST00000361644.4">
    <property type="protein sequence ID" value="ENSP00000355198.2"/>
    <property type="RefSeq nucleotide sequence ID" value="NM_002365.5"/>
    <property type="RefSeq protein sequence ID" value="NP_002356.2"/>
</dbReference>
<dbReference type="UCSC" id="uc004dca.3">
    <property type="organism name" value="human"/>
</dbReference>
<dbReference type="AGR" id="HGNC:6810"/>
<dbReference type="CTD" id="4114"/>
<dbReference type="GeneCards" id="MAGEB3"/>
<dbReference type="HGNC" id="HGNC:6810">
    <property type="gene designation" value="MAGEB3"/>
</dbReference>
<dbReference type="HPA" id="ENSG00000198798">
    <property type="expression patterns" value="Group enriched (epididymis, testis)"/>
</dbReference>
<dbReference type="MIM" id="300152">
    <property type="type" value="gene"/>
</dbReference>
<dbReference type="neXtProt" id="NX_O15480"/>
<dbReference type="OpenTargets" id="ENSG00000198798"/>
<dbReference type="PharmGKB" id="PA30556"/>
<dbReference type="VEuPathDB" id="HostDB:ENSG00000198798"/>
<dbReference type="eggNOG" id="KOG4562">
    <property type="taxonomic scope" value="Eukaryota"/>
</dbReference>
<dbReference type="GeneTree" id="ENSGT00940000164194"/>
<dbReference type="HOGENOM" id="CLU_039582_1_0_1"/>
<dbReference type="InParanoid" id="O15480"/>
<dbReference type="OMA" id="WAKVNQT"/>
<dbReference type="OrthoDB" id="205198at2759"/>
<dbReference type="PAN-GO" id="O15480">
    <property type="GO annotations" value="2 GO annotations based on evolutionary models"/>
</dbReference>
<dbReference type="PhylomeDB" id="O15480"/>
<dbReference type="TreeFam" id="TF328505"/>
<dbReference type="PathwayCommons" id="O15480"/>
<dbReference type="SignaLink" id="O15480"/>
<dbReference type="BioGRID-ORCS" id="4114">
    <property type="hits" value="11 hits in 756 CRISPR screens"/>
</dbReference>
<dbReference type="GenomeRNAi" id="4114"/>
<dbReference type="Pharos" id="O15480">
    <property type="development level" value="Tdark"/>
</dbReference>
<dbReference type="PRO" id="PR:O15480"/>
<dbReference type="Proteomes" id="UP000005640">
    <property type="component" value="Chromosome X"/>
</dbReference>
<dbReference type="RNAct" id="O15480">
    <property type="molecule type" value="protein"/>
</dbReference>
<dbReference type="Bgee" id="ENSG00000198798">
    <property type="expression patterns" value="Expressed in male germ line stem cell (sensu Vertebrata) in testis and 8 other cell types or tissues"/>
</dbReference>
<dbReference type="GO" id="GO:0005634">
    <property type="term" value="C:nucleus"/>
    <property type="evidence" value="ECO:0000318"/>
    <property type="project" value="GO_Central"/>
</dbReference>
<dbReference type="GO" id="GO:0000122">
    <property type="term" value="P:negative regulation of transcription by RNA polymerase II"/>
    <property type="evidence" value="ECO:0000318"/>
    <property type="project" value="GO_Central"/>
</dbReference>
<dbReference type="FunFam" id="1.10.10.1200:FF:000007">
    <property type="entry name" value="Melanoma-associated antigen C2"/>
    <property type="match status" value="1"/>
</dbReference>
<dbReference type="FunFam" id="1.10.10.1210:FF:000001">
    <property type="entry name" value="melanoma-associated antigen D1"/>
    <property type="match status" value="1"/>
</dbReference>
<dbReference type="Gene3D" id="1.10.10.1200">
    <property type="entry name" value="MAGE homology domain, winged helix WH1 motif"/>
    <property type="match status" value="1"/>
</dbReference>
<dbReference type="Gene3D" id="1.10.10.1210">
    <property type="entry name" value="MAGE homology domain, winged helix WH2 motif"/>
    <property type="match status" value="1"/>
</dbReference>
<dbReference type="InterPro" id="IPR037445">
    <property type="entry name" value="MAGE"/>
</dbReference>
<dbReference type="InterPro" id="IPR021072">
    <property type="entry name" value="MAGE_N"/>
</dbReference>
<dbReference type="InterPro" id="IPR041898">
    <property type="entry name" value="MAGE_WH1"/>
</dbReference>
<dbReference type="InterPro" id="IPR041899">
    <property type="entry name" value="MAGE_WH2"/>
</dbReference>
<dbReference type="InterPro" id="IPR002190">
    <property type="entry name" value="MHD_dom"/>
</dbReference>
<dbReference type="PANTHER" id="PTHR11736:SF53">
    <property type="entry name" value="MELANOMA-ASSOCIATED ANTIGEN B3"/>
    <property type="match status" value="1"/>
</dbReference>
<dbReference type="PANTHER" id="PTHR11736">
    <property type="entry name" value="MELANOMA-ASSOCIATED ANTIGEN MAGE ANTIGEN"/>
    <property type="match status" value="1"/>
</dbReference>
<dbReference type="Pfam" id="PF01454">
    <property type="entry name" value="MAGE"/>
    <property type="match status" value="1"/>
</dbReference>
<dbReference type="Pfam" id="PF12440">
    <property type="entry name" value="MAGE_N"/>
    <property type="match status" value="1"/>
</dbReference>
<dbReference type="SMART" id="SM01373">
    <property type="entry name" value="MAGE"/>
    <property type="match status" value="1"/>
</dbReference>
<dbReference type="SMART" id="SM01392">
    <property type="entry name" value="MAGE_N"/>
    <property type="match status" value="1"/>
</dbReference>
<dbReference type="PROSITE" id="PS50838">
    <property type="entry name" value="MAGE"/>
    <property type="match status" value="1"/>
</dbReference>
<feature type="chain" id="PRO_0000156714" description="Melanoma-associated antigen B3">
    <location>
        <begin position="1"/>
        <end position="346"/>
    </location>
</feature>
<feature type="domain" description="MAGE" evidence="1">
    <location>
        <begin position="111"/>
        <end position="310"/>
    </location>
</feature>
<feature type="region of interest" description="Disordered" evidence="2">
    <location>
        <begin position="1"/>
        <end position="35"/>
    </location>
</feature>
<feature type="compositionally biased region" description="Polar residues" evidence="2">
    <location>
        <begin position="18"/>
        <end position="33"/>
    </location>
</feature>
<feature type="sequence variant" id="VAR_021360" description="In dbSNP:rs2071308." evidence="3 4 5">
    <original>R</original>
    <variation>H</variation>
    <location>
        <position position="107"/>
    </location>
</feature>
<feature type="sequence variant" id="VAR_021361" description="In dbSNP:rs2071309." evidence="3 4 5">
    <original>I</original>
    <variation>T</variation>
    <location>
        <position position="112"/>
    </location>
</feature>
<proteinExistence type="evidence at protein level"/>
<accession>O15480</accession>
<accession>A0AVE4</accession>
<accession>B3KQ52</accession>
<accession>O75861</accession>
<reference key="1">
    <citation type="journal article" date="1997" name="Genomics">
        <title>Two members of the human MAGEB gene family located in Xp21.3 are expressed in tumors of various histological origins.</title>
        <authorList>
            <person name="Lurquin C."/>
            <person name="De Smet C."/>
            <person name="Brasseur F."/>
            <person name="Muscatelli F."/>
            <person name="Martelange V."/>
            <person name="De Plaen E."/>
            <person name="Brasseur R."/>
            <person name="Monaco A.P."/>
            <person name="Boon T."/>
        </authorList>
    </citation>
    <scope>NUCLEOTIDE SEQUENCE [GENOMIC DNA]</scope>
    <scope>VARIANTS HIS-107 AND THR-112</scope>
</reference>
<reference key="2">
    <citation type="journal article" date="2004" name="Nat. Genet.">
        <title>Complete sequencing and characterization of 21,243 full-length human cDNAs.</title>
        <authorList>
            <person name="Ota T."/>
            <person name="Suzuki Y."/>
            <person name="Nishikawa T."/>
            <person name="Otsuki T."/>
            <person name="Sugiyama T."/>
            <person name="Irie R."/>
            <person name="Wakamatsu A."/>
            <person name="Hayashi K."/>
            <person name="Sato H."/>
            <person name="Nagai K."/>
            <person name="Kimura K."/>
            <person name="Makita H."/>
            <person name="Sekine M."/>
            <person name="Obayashi M."/>
            <person name="Nishi T."/>
            <person name="Shibahara T."/>
            <person name="Tanaka T."/>
            <person name="Ishii S."/>
            <person name="Yamamoto J."/>
            <person name="Saito K."/>
            <person name="Kawai Y."/>
            <person name="Isono Y."/>
            <person name="Nakamura Y."/>
            <person name="Nagahari K."/>
            <person name="Murakami K."/>
            <person name="Yasuda T."/>
            <person name="Iwayanagi T."/>
            <person name="Wagatsuma M."/>
            <person name="Shiratori A."/>
            <person name="Sudo H."/>
            <person name="Hosoiri T."/>
            <person name="Kaku Y."/>
            <person name="Kodaira H."/>
            <person name="Kondo H."/>
            <person name="Sugawara M."/>
            <person name="Takahashi M."/>
            <person name="Kanda K."/>
            <person name="Yokoi T."/>
            <person name="Furuya T."/>
            <person name="Kikkawa E."/>
            <person name="Omura Y."/>
            <person name="Abe K."/>
            <person name="Kamihara K."/>
            <person name="Katsuta N."/>
            <person name="Sato K."/>
            <person name="Tanikawa M."/>
            <person name="Yamazaki M."/>
            <person name="Ninomiya K."/>
            <person name="Ishibashi T."/>
            <person name="Yamashita H."/>
            <person name="Murakawa K."/>
            <person name="Fujimori K."/>
            <person name="Tanai H."/>
            <person name="Kimata M."/>
            <person name="Watanabe M."/>
            <person name="Hiraoka S."/>
            <person name="Chiba Y."/>
            <person name="Ishida S."/>
            <person name="Ono Y."/>
            <person name="Takiguchi S."/>
            <person name="Watanabe S."/>
            <person name="Yosida M."/>
            <person name="Hotuta T."/>
            <person name="Kusano J."/>
            <person name="Kanehori K."/>
            <person name="Takahashi-Fujii A."/>
            <person name="Hara H."/>
            <person name="Tanase T.-O."/>
            <person name="Nomura Y."/>
            <person name="Togiya S."/>
            <person name="Komai F."/>
            <person name="Hara R."/>
            <person name="Takeuchi K."/>
            <person name="Arita M."/>
            <person name="Imose N."/>
            <person name="Musashino K."/>
            <person name="Yuuki H."/>
            <person name="Oshima A."/>
            <person name="Sasaki N."/>
            <person name="Aotsuka S."/>
            <person name="Yoshikawa Y."/>
            <person name="Matsunawa H."/>
            <person name="Ichihara T."/>
            <person name="Shiohata N."/>
            <person name="Sano S."/>
            <person name="Moriya S."/>
            <person name="Momiyama H."/>
            <person name="Satoh N."/>
            <person name="Takami S."/>
            <person name="Terashima Y."/>
            <person name="Suzuki O."/>
            <person name="Nakagawa S."/>
            <person name="Senoh A."/>
            <person name="Mizoguchi H."/>
            <person name="Goto Y."/>
            <person name="Shimizu F."/>
            <person name="Wakebe H."/>
            <person name="Hishigaki H."/>
            <person name="Watanabe T."/>
            <person name="Sugiyama A."/>
            <person name="Takemoto M."/>
            <person name="Kawakami B."/>
            <person name="Yamazaki M."/>
            <person name="Watanabe K."/>
            <person name="Kumagai A."/>
            <person name="Itakura S."/>
            <person name="Fukuzumi Y."/>
            <person name="Fujimori Y."/>
            <person name="Komiyama M."/>
            <person name="Tashiro H."/>
            <person name="Tanigami A."/>
            <person name="Fujiwara T."/>
            <person name="Ono T."/>
            <person name="Yamada K."/>
            <person name="Fujii Y."/>
            <person name="Ozaki K."/>
            <person name="Hirao M."/>
            <person name="Ohmori Y."/>
            <person name="Kawabata A."/>
            <person name="Hikiji T."/>
            <person name="Kobatake N."/>
            <person name="Inagaki H."/>
            <person name="Ikema Y."/>
            <person name="Okamoto S."/>
            <person name="Okitani R."/>
            <person name="Kawakami T."/>
            <person name="Noguchi S."/>
            <person name="Itoh T."/>
            <person name="Shigeta K."/>
            <person name="Senba T."/>
            <person name="Matsumura K."/>
            <person name="Nakajima Y."/>
            <person name="Mizuno T."/>
            <person name="Morinaga M."/>
            <person name="Sasaki M."/>
            <person name="Togashi T."/>
            <person name="Oyama M."/>
            <person name="Hata H."/>
            <person name="Watanabe M."/>
            <person name="Komatsu T."/>
            <person name="Mizushima-Sugano J."/>
            <person name="Satoh T."/>
            <person name="Shirai Y."/>
            <person name="Takahashi Y."/>
            <person name="Nakagawa K."/>
            <person name="Okumura K."/>
            <person name="Nagase T."/>
            <person name="Nomura N."/>
            <person name="Kikuchi H."/>
            <person name="Masuho Y."/>
            <person name="Yamashita R."/>
            <person name="Nakai K."/>
            <person name="Yada T."/>
            <person name="Nakamura Y."/>
            <person name="Ohara O."/>
            <person name="Isogai T."/>
            <person name="Sugano S."/>
        </authorList>
    </citation>
    <scope>NUCLEOTIDE SEQUENCE [LARGE SCALE MRNA]</scope>
    <scope>VARIANTS HIS-107 AND THR-112</scope>
    <source>
        <tissue>Testis</tissue>
    </source>
</reference>
<reference key="3">
    <citation type="journal article" date="2005" name="Nature">
        <title>The DNA sequence of the human X chromosome.</title>
        <authorList>
            <person name="Ross M.T."/>
            <person name="Grafham D.V."/>
            <person name="Coffey A.J."/>
            <person name="Scherer S."/>
            <person name="McLay K."/>
            <person name="Muzny D."/>
            <person name="Platzer M."/>
            <person name="Howell G.R."/>
            <person name="Burrows C."/>
            <person name="Bird C.P."/>
            <person name="Frankish A."/>
            <person name="Lovell F.L."/>
            <person name="Howe K.L."/>
            <person name="Ashurst J.L."/>
            <person name="Fulton R.S."/>
            <person name="Sudbrak R."/>
            <person name="Wen G."/>
            <person name="Jones M.C."/>
            <person name="Hurles M.E."/>
            <person name="Andrews T.D."/>
            <person name="Scott C.E."/>
            <person name="Searle S."/>
            <person name="Ramser J."/>
            <person name="Whittaker A."/>
            <person name="Deadman R."/>
            <person name="Carter N.P."/>
            <person name="Hunt S.E."/>
            <person name="Chen R."/>
            <person name="Cree A."/>
            <person name="Gunaratne P."/>
            <person name="Havlak P."/>
            <person name="Hodgson A."/>
            <person name="Metzker M.L."/>
            <person name="Richards S."/>
            <person name="Scott G."/>
            <person name="Steffen D."/>
            <person name="Sodergren E."/>
            <person name="Wheeler D.A."/>
            <person name="Worley K.C."/>
            <person name="Ainscough R."/>
            <person name="Ambrose K.D."/>
            <person name="Ansari-Lari M.A."/>
            <person name="Aradhya S."/>
            <person name="Ashwell R.I."/>
            <person name="Babbage A.K."/>
            <person name="Bagguley C.L."/>
            <person name="Ballabio A."/>
            <person name="Banerjee R."/>
            <person name="Barker G.E."/>
            <person name="Barlow K.F."/>
            <person name="Barrett I.P."/>
            <person name="Bates K.N."/>
            <person name="Beare D.M."/>
            <person name="Beasley H."/>
            <person name="Beasley O."/>
            <person name="Beck A."/>
            <person name="Bethel G."/>
            <person name="Blechschmidt K."/>
            <person name="Brady N."/>
            <person name="Bray-Allen S."/>
            <person name="Bridgeman A.M."/>
            <person name="Brown A.J."/>
            <person name="Brown M.J."/>
            <person name="Bonnin D."/>
            <person name="Bruford E.A."/>
            <person name="Buhay C."/>
            <person name="Burch P."/>
            <person name="Burford D."/>
            <person name="Burgess J."/>
            <person name="Burrill W."/>
            <person name="Burton J."/>
            <person name="Bye J.M."/>
            <person name="Carder C."/>
            <person name="Carrel L."/>
            <person name="Chako J."/>
            <person name="Chapman J.C."/>
            <person name="Chavez D."/>
            <person name="Chen E."/>
            <person name="Chen G."/>
            <person name="Chen Y."/>
            <person name="Chen Z."/>
            <person name="Chinault C."/>
            <person name="Ciccodicola A."/>
            <person name="Clark S.Y."/>
            <person name="Clarke G."/>
            <person name="Clee C.M."/>
            <person name="Clegg S."/>
            <person name="Clerc-Blankenburg K."/>
            <person name="Clifford K."/>
            <person name="Cobley V."/>
            <person name="Cole C.G."/>
            <person name="Conquer J.S."/>
            <person name="Corby N."/>
            <person name="Connor R.E."/>
            <person name="David R."/>
            <person name="Davies J."/>
            <person name="Davis C."/>
            <person name="Davis J."/>
            <person name="Delgado O."/>
            <person name="Deshazo D."/>
            <person name="Dhami P."/>
            <person name="Ding Y."/>
            <person name="Dinh H."/>
            <person name="Dodsworth S."/>
            <person name="Draper H."/>
            <person name="Dugan-Rocha S."/>
            <person name="Dunham A."/>
            <person name="Dunn M."/>
            <person name="Durbin K.J."/>
            <person name="Dutta I."/>
            <person name="Eades T."/>
            <person name="Ellwood M."/>
            <person name="Emery-Cohen A."/>
            <person name="Errington H."/>
            <person name="Evans K.L."/>
            <person name="Faulkner L."/>
            <person name="Francis F."/>
            <person name="Frankland J."/>
            <person name="Fraser A.E."/>
            <person name="Galgoczy P."/>
            <person name="Gilbert J."/>
            <person name="Gill R."/>
            <person name="Gloeckner G."/>
            <person name="Gregory S.G."/>
            <person name="Gribble S."/>
            <person name="Griffiths C."/>
            <person name="Grocock R."/>
            <person name="Gu Y."/>
            <person name="Gwilliam R."/>
            <person name="Hamilton C."/>
            <person name="Hart E.A."/>
            <person name="Hawes A."/>
            <person name="Heath P.D."/>
            <person name="Heitmann K."/>
            <person name="Hennig S."/>
            <person name="Hernandez J."/>
            <person name="Hinzmann B."/>
            <person name="Ho S."/>
            <person name="Hoffs M."/>
            <person name="Howden P.J."/>
            <person name="Huckle E.J."/>
            <person name="Hume J."/>
            <person name="Hunt P.J."/>
            <person name="Hunt A.R."/>
            <person name="Isherwood J."/>
            <person name="Jacob L."/>
            <person name="Johnson D."/>
            <person name="Jones S."/>
            <person name="de Jong P.J."/>
            <person name="Joseph S.S."/>
            <person name="Keenan S."/>
            <person name="Kelly S."/>
            <person name="Kershaw J.K."/>
            <person name="Khan Z."/>
            <person name="Kioschis P."/>
            <person name="Klages S."/>
            <person name="Knights A.J."/>
            <person name="Kosiura A."/>
            <person name="Kovar-Smith C."/>
            <person name="Laird G.K."/>
            <person name="Langford C."/>
            <person name="Lawlor S."/>
            <person name="Leversha M."/>
            <person name="Lewis L."/>
            <person name="Liu W."/>
            <person name="Lloyd C."/>
            <person name="Lloyd D.M."/>
            <person name="Loulseged H."/>
            <person name="Loveland J.E."/>
            <person name="Lovell J.D."/>
            <person name="Lozado R."/>
            <person name="Lu J."/>
            <person name="Lyne R."/>
            <person name="Ma J."/>
            <person name="Maheshwari M."/>
            <person name="Matthews L.H."/>
            <person name="McDowall J."/>
            <person name="McLaren S."/>
            <person name="McMurray A."/>
            <person name="Meidl P."/>
            <person name="Meitinger T."/>
            <person name="Milne S."/>
            <person name="Miner G."/>
            <person name="Mistry S.L."/>
            <person name="Morgan M."/>
            <person name="Morris S."/>
            <person name="Mueller I."/>
            <person name="Mullikin J.C."/>
            <person name="Nguyen N."/>
            <person name="Nordsiek G."/>
            <person name="Nyakatura G."/>
            <person name="O'dell C.N."/>
            <person name="Okwuonu G."/>
            <person name="Palmer S."/>
            <person name="Pandian R."/>
            <person name="Parker D."/>
            <person name="Parrish J."/>
            <person name="Pasternak S."/>
            <person name="Patel D."/>
            <person name="Pearce A.V."/>
            <person name="Pearson D.M."/>
            <person name="Pelan S.E."/>
            <person name="Perez L."/>
            <person name="Porter K.M."/>
            <person name="Ramsey Y."/>
            <person name="Reichwald K."/>
            <person name="Rhodes S."/>
            <person name="Ridler K.A."/>
            <person name="Schlessinger D."/>
            <person name="Schueler M.G."/>
            <person name="Sehra H.K."/>
            <person name="Shaw-Smith C."/>
            <person name="Shen H."/>
            <person name="Sheridan E.M."/>
            <person name="Shownkeen R."/>
            <person name="Skuce C.D."/>
            <person name="Smith M.L."/>
            <person name="Sotheran E.C."/>
            <person name="Steingruber H.E."/>
            <person name="Steward C.A."/>
            <person name="Storey R."/>
            <person name="Swann R.M."/>
            <person name="Swarbreck D."/>
            <person name="Tabor P.E."/>
            <person name="Taudien S."/>
            <person name="Taylor T."/>
            <person name="Teague B."/>
            <person name="Thomas K."/>
            <person name="Thorpe A."/>
            <person name="Timms K."/>
            <person name="Tracey A."/>
            <person name="Trevanion S."/>
            <person name="Tromans A.C."/>
            <person name="d'Urso M."/>
            <person name="Verduzco D."/>
            <person name="Villasana D."/>
            <person name="Waldron L."/>
            <person name="Wall M."/>
            <person name="Wang Q."/>
            <person name="Warren J."/>
            <person name="Warry G.L."/>
            <person name="Wei X."/>
            <person name="West A."/>
            <person name="Whitehead S.L."/>
            <person name="Whiteley M.N."/>
            <person name="Wilkinson J.E."/>
            <person name="Willey D.L."/>
            <person name="Williams G."/>
            <person name="Williams L."/>
            <person name="Williamson A."/>
            <person name="Williamson H."/>
            <person name="Wilming L."/>
            <person name="Woodmansey R.L."/>
            <person name="Wray P.W."/>
            <person name="Yen J."/>
            <person name="Zhang J."/>
            <person name="Zhou J."/>
            <person name="Zoghbi H."/>
            <person name="Zorilla S."/>
            <person name="Buck D."/>
            <person name="Reinhardt R."/>
            <person name="Poustka A."/>
            <person name="Rosenthal A."/>
            <person name="Lehrach H."/>
            <person name="Meindl A."/>
            <person name="Minx P.J."/>
            <person name="Hillier L.W."/>
            <person name="Willard H.F."/>
            <person name="Wilson R.K."/>
            <person name="Waterston R.H."/>
            <person name="Rice C.M."/>
            <person name="Vaudin M."/>
            <person name="Coulson A."/>
            <person name="Nelson D.L."/>
            <person name="Weinstock G."/>
            <person name="Sulston J.E."/>
            <person name="Durbin R.M."/>
            <person name="Hubbard T."/>
            <person name="Gibbs R.A."/>
            <person name="Beck S."/>
            <person name="Rogers J."/>
            <person name="Bentley D.R."/>
        </authorList>
    </citation>
    <scope>NUCLEOTIDE SEQUENCE [LARGE SCALE GENOMIC DNA]</scope>
</reference>
<reference key="4">
    <citation type="journal article" date="2004" name="Genome Res.">
        <title>The status, quality, and expansion of the NIH full-length cDNA project: the Mammalian Gene Collection (MGC).</title>
        <authorList>
            <consortium name="The MGC Project Team"/>
        </authorList>
    </citation>
    <scope>NUCLEOTIDE SEQUENCE [LARGE SCALE MRNA]</scope>
    <scope>VARIANTS HIS-107 AND THR-112</scope>
</reference>